<reference key="1">
    <citation type="journal article" date="1994" name="J. Biol. Chem.">
        <title>Expression cloning and characterization of the hamster ileal sodium-dependent bile acid transporter.</title>
        <authorList>
            <person name="Wong M.H."/>
            <person name="Oelkers P.M."/>
            <person name="Craddock A.L."/>
            <person name="Dawson P.A."/>
        </authorList>
    </citation>
    <scope>NUCLEOTIDE SEQUENCE [MRNA]</scope>
    <scope>FUNCTION</scope>
    <scope>TRANSPORT ACTIVITY</scope>
    <scope>BIOPHYSICOCHEMICAL PROPERTIES</scope>
    <scope>TISSUE SPECIFICITY</scope>
    <source>
        <tissue>Ileum</tissue>
    </source>
</reference>
<reference key="2">
    <citation type="journal article" date="2011" name="Nat. Biotechnol.">
        <title>The genomic sequence of the Chinese hamster ovary (CHO)-K1 cell line.</title>
        <authorList>
            <person name="Xu X."/>
            <person name="Nagarajan H."/>
            <person name="Lewis N.E."/>
            <person name="Pan S."/>
            <person name="Cai Z."/>
            <person name="Liu X."/>
            <person name="Chen W."/>
            <person name="Xie M."/>
            <person name="Wang W."/>
            <person name="Hammond S."/>
            <person name="Andersen M.R."/>
            <person name="Neff N."/>
            <person name="Passarelli B."/>
            <person name="Koh W."/>
            <person name="Fan H.C."/>
            <person name="Wang J."/>
            <person name="Gui Y."/>
            <person name="Lee K.H."/>
            <person name="Betenbaugh M.J."/>
            <person name="Quake S.R."/>
            <person name="Famili I."/>
            <person name="Palsson B.O."/>
            <person name="Wang J."/>
        </authorList>
    </citation>
    <scope>NUCLEOTIDE SEQUENCE [LARGE SCALE GENOMIC DNA]</scope>
</reference>
<reference key="3">
    <citation type="journal article" date="1995" name="J. Biol. Chem.">
        <title>Identification of a mutation in the ileal sodium-dependent bile acid transporter gene that abolishes transport activity.</title>
        <authorList>
            <person name="Wong M.H."/>
            <person name="Oelkers P."/>
            <person name="Dawson P.A."/>
        </authorList>
    </citation>
    <scope>FUNCTION</scope>
    <scope>TRANSPORT ACTIVITY</scope>
    <source>
        <tissue>Ileum</tissue>
    </source>
</reference>
<keyword id="KW-0325">Glycoprotein</keyword>
<keyword id="KW-0406">Ion transport</keyword>
<keyword id="KW-0445">Lipid transport</keyword>
<keyword id="KW-0472">Membrane</keyword>
<keyword id="KW-0597">Phosphoprotein</keyword>
<keyword id="KW-1185">Reference proteome</keyword>
<keyword id="KW-0915">Sodium</keyword>
<keyword id="KW-0739">Sodium transport</keyword>
<keyword id="KW-0769">Symport</keyword>
<keyword id="KW-0812">Transmembrane</keyword>
<keyword id="KW-1133">Transmembrane helix</keyword>
<keyword id="KW-0813">Transport</keyword>
<evidence type="ECO:0000250" key="1"/>
<evidence type="ECO:0000250" key="2">
    <source>
        <dbReference type="UniProtKB" id="P70172"/>
    </source>
</evidence>
<evidence type="ECO:0000250" key="3">
    <source>
        <dbReference type="UniProtKB" id="Q12908"/>
    </source>
</evidence>
<evidence type="ECO:0000250" key="4">
    <source>
        <dbReference type="UniProtKB" id="Q28727"/>
    </source>
</evidence>
<evidence type="ECO:0000255" key="5"/>
<evidence type="ECO:0000256" key="6">
    <source>
        <dbReference type="SAM" id="MobiDB-lite"/>
    </source>
</evidence>
<evidence type="ECO:0000269" key="7">
    <source>
    </source>
</evidence>
<evidence type="ECO:0000269" key="8">
    <source>
    </source>
</evidence>
<evidence type="ECO:0000305" key="9"/>
<evidence type="ECO:0000305" key="10">
    <source>
    </source>
</evidence>
<evidence type="ECO:0000305" key="11">
    <source>
    </source>
</evidence>
<feature type="chain" id="PRO_0000052338" description="Ileal sodium/bile acid cotransporter">
    <location>
        <begin position="1"/>
        <end position="348"/>
    </location>
</feature>
<feature type="topological domain" description="Extracellular" evidence="5">
    <location>
        <begin position="1"/>
        <end position="28"/>
    </location>
</feature>
<feature type="transmembrane region" description="Helical" evidence="5">
    <location>
        <begin position="29"/>
        <end position="49"/>
    </location>
</feature>
<feature type="topological domain" description="Cytoplasmic" evidence="5">
    <location>
        <begin position="50"/>
        <end position="81"/>
    </location>
</feature>
<feature type="transmembrane region" description="Helical" evidence="5">
    <location>
        <begin position="82"/>
        <end position="102"/>
    </location>
</feature>
<feature type="topological domain" description="Extracellular" evidence="5">
    <location>
        <begin position="103"/>
        <end position="126"/>
    </location>
</feature>
<feature type="transmembrane region" description="Helical" evidence="5">
    <location>
        <begin position="127"/>
        <end position="147"/>
    </location>
</feature>
<feature type="topological domain" description="Cytoplasmic" evidence="5">
    <location>
        <begin position="148"/>
        <end position="157"/>
    </location>
</feature>
<feature type="transmembrane region" description="Helical" evidence="5">
    <location>
        <begin position="158"/>
        <end position="178"/>
    </location>
</feature>
<feature type="topological domain" description="Extracellular" evidence="5">
    <location>
        <begin position="179"/>
        <end position="195"/>
    </location>
</feature>
<feature type="transmembrane region" description="Helical" evidence="5">
    <location>
        <begin position="196"/>
        <end position="216"/>
    </location>
</feature>
<feature type="topological domain" description="Cytoplasmic" evidence="5">
    <location>
        <begin position="217"/>
        <end position="224"/>
    </location>
</feature>
<feature type="transmembrane region" description="Helical" evidence="5">
    <location>
        <begin position="225"/>
        <end position="245"/>
    </location>
</feature>
<feature type="topological domain" description="Extracellular" evidence="5">
    <location>
        <begin position="246"/>
        <end position="284"/>
    </location>
</feature>
<feature type="transmembrane region" description="Helical" evidence="5">
    <location>
        <begin position="285"/>
        <end position="305"/>
    </location>
</feature>
<feature type="topological domain" description="Cytoplasmic" evidence="5">
    <location>
        <begin position="306"/>
        <end position="348"/>
    </location>
</feature>
<feature type="region of interest" description="Disordered" evidence="6">
    <location>
        <begin position="322"/>
        <end position="348"/>
    </location>
</feature>
<feature type="compositionally biased region" description="Basic and acidic residues" evidence="6">
    <location>
        <begin position="322"/>
        <end position="332"/>
    </location>
</feature>
<feature type="modified residue" description="Phosphoserine" evidence="2">
    <location>
        <position position="335"/>
    </location>
</feature>
<feature type="glycosylation site" description="N-linked (GlcNAc...) asparagine" evidence="5">
    <location>
        <position position="3"/>
    </location>
</feature>
<feature type="glycosylation site" description="N-linked (GlcNAc...) asparagine" evidence="5">
    <location>
        <position position="10"/>
    </location>
</feature>
<feature type="sequence conflict" description="In Ref. 2; EGW09943." evidence="9" ref="2">
    <original>SSICNPNATI</original>
    <variation>WTVCPPNATV</variation>
    <location>
        <begin position="4"/>
        <end position="13"/>
    </location>
</feature>
<feature type="sequence conflict" description="In Ref. 2; EGW09943." evidence="9" ref="2">
    <original>APESN</original>
    <variation>VPESD</variation>
    <location>
        <begin position="21"/>
        <end position="25"/>
    </location>
</feature>
<feature type="sequence conflict" description="In Ref. 2; EGW09943." evidence="9" ref="2">
    <original>R</original>
    <variation>K</variation>
    <location>
        <position position="63"/>
    </location>
</feature>
<feature type="sequence conflict" description="In Ref. 2; EGW09943." evidence="9" ref="2">
    <original>V</original>
    <variation>I</variation>
    <location>
        <position position="85"/>
    </location>
</feature>
<feature type="sequence conflict" description="In Ref. 2; EGW09943." evidence="9" ref="2">
    <original>K</original>
    <variation>R</variation>
    <location>
        <position position="185"/>
    </location>
</feature>
<feature type="sequence conflict" description="In Ref. 2; EGW09943." evidence="9" ref="2">
    <original>T</original>
    <variation>I</variation>
    <location>
        <position position="221"/>
    </location>
</feature>
<feature type="sequence conflict" description="In Ref. 2; EGW09943." evidence="9" ref="2">
    <original>A</original>
    <variation>V</variation>
    <location>
        <position position="299"/>
    </location>
</feature>
<feature type="sequence conflict" description="In Ref. 2; EGW09943." evidence="9" ref="2">
    <original>G</original>
    <variation>R</variation>
    <location>
        <position position="316"/>
    </location>
</feature>
<feature type="sequence conflict" description="In Ref. 2; EGW09943." evidence="9" ref="2">
    <original>M</original>
    <variation>V</variation>
    <location>
        <position position="330"/>
    </location>
</feature>
<feature type="sequence conflict" description="In Ref. 2; EGW09943." evidence="9" ref="2">
    <original>P</original>
    <variation>L</variation>
    <location>
        <position position="345"/>
    </location>
</feature>
<comment type="function">
    <text evidence="3 7 8 10 11">Plays a critical role in the sodium-dependent reabsorption of bile acids from the lumen of the small intestine (PubMed:7592981). Transports various bile acids, unconjugated or conjugated, such as cholate and taurocholate (PubMed:7592981, PubMed:8288599). Also responsible for bile acid transport in the renal proximal tubules, a salvage mechanism that helps conserve bile acids (Probable). Works collaboratively with the Na(+)-taurocholate cotransporting polypeptide (NTCP), the organic solute transporter (OST), and the bile salt export pump (BSEP), to ensure efficacious biological recycling of bile acids during enterohepatic circulation (By similarity).</text>
</comment>
<comment type="catalytic activity">
    <reaction evidence="7 8">
        <text>taurocholate(out) + 2 Na(+)(out) = taurocholate(in) + 2 Na(+)(in)</text>
        <dbReference type="Rhea" id="RHEA:71875"/>
        <dbReference type="ChEBI" id="CHEBI:29101"/>
        <dbReference type="ChEBI" id="CHEBI:36257"/>
    </reaction>
</comment>
<comment type="catalytic activity">
    <reaction evidence="3">
        <text>cholate(out) + 2 Na(+)(out) = cholate(in) + 2 Na(+)(in)</text>
        <dbReference type="Rhea" id="RHEA:71911"/>
        <dbReference type="ChEBI" id="CHEBI:29101"/>
        <dbReference type="ChEBI" id="CHEBI:29747"/>
    </reaction>
</comment>
<comment type="catalytic activity">
    <reaction evidence="4">
        <text>taurochenodeoxycholate(out) + 2 Na(+)(out) = taurochenodeoxycholate(in) + 2 Na(+)(in)</text>
        <dbReference type="Rhea" id="RHEA:71923"/>
        <dbReference type="ChEBI" id="CHEBI:9407"/>
        <dbReference type="ChEBI" id="CHEBI:29101"/>
    </reaction>
</comment>
<comment type="catalytic activity">
    <reaction evidence="4">
        <text>tauroursodeoxycholate(out) + 2 Na(+)(out) = tauroursodeoxycholate(in) + 2 Na(+)(in)</text>
        <dbReference type="Rhea" id="RHEA:71927"/>
        <dbReference type="ChEBI" id="CHEBI:29101"/>
        <dbReference type="ChEBI" id="CHEBI:132028"/>
    </reaction>
</comment>
<comment type="catalytic activity">
    <reaction evidence="4">
        <text>glycocholate(out) + 2 Na(+)(out) = glycocholate(in) + 2 Na(+)(in)</text>
        <dbReference type="Rhea" id="RHEA:71935"/>
        <dbReference type="ChEBI" id="CHEBI:29101"/>
        <dbReference type="ChEBI" id="CHEBI:29746"/>
    </reaction>
</comment>
<comment type="catalytic activity">
    <reaction evidence="4">
        <text>tauronorcholate(out) + 2 Na(+)(out) = tauronorcholate(in) + 2 Na(+)(in)</text>
        <dbReference type="Rhea" id="RHEA:71915"/>
        <dbReference type="ChEBI" id="CHEBI:29101"/>
        <dbReference type="ChEBI" id="CHEBI:191405"/>
    </reaction>
</comment>
<comment type="catalytic activity">
    <reaction evidence="4">
        <text>tauroallocholate(out) + 2 Na(+)(out) = tauroallocholate(in) + 2 Na(+)(in)</text>
        <dbReference type="Rhea" id="RHEA:51840"/>
        <dbReference type="ChEBI" id="CHEBI:29101"/>
        <dbReference type="ChEBI" id="CHEBI:191406"/>
    </reaction>
</comment>
<comment type="catalytic activity">
    <reaction evidence="4">
        <text>taurodeoxycholate(out) + 2 Na(+)(out) = taurodeoxycholate(in) + 2 Na(+)(in)</text>
        <dbReference type="Rhea" id="RHEA:72087"/>
        <dbReference type="ChEBI" id="CHEBI:29101"/>
        <dbReference type="ChEBI" id="CHEBI:36261"/>
    </reaction>
</comment>
<comment type="catalytic activity">
    <reaction evidence="4">
        <text>tauro-beta-muricholate(out) + 2 Na(+)(out) = tauro-beta-muricholate(in) + 2 Na(+)(in)</text>
        <dbReference type="Rhea" id="RHEA:72179"/>
        <dbReference type="ChEBI" id="CHEBI:29101"/>
        <dbReference type="ChEBI" id="CHEBI:133064"/>
    </reaction>
</comment>
<comment type="biophysicochemical properties">
    <kinetics>
        <KM evidence="8">33 uM for taurocholate</KM>
    </kinetics>
</comment>
<comment type="subunit">
    <text evidence="1">Monomer and homodimer.</text>
</comment>
<comment type="subcellular location">
    <subcellularLocation>
        <location>Membrane</location>
        <topology>Multi-pass membrane protein</topology>
    </subcellularLocation>
</comment>
<comment type="tissue specificity">
    <text evidence="8">Mainly expressed in ileum and kidney, lower expression in jejunum.</text>
</comment>
<comment type="similarity">
    <text evidence="9">Belongs to the bile acid:sodium symporter (BASS) (TC 2.A.28) family.</text>
</comment>
<sequence length="348" mass="37920">MDNSSICNPNATICEGDSCIAPESNFNAILSVVMSTVLTILLALVMFSMGCNVELHKFLGHLRRPWGIVVGFLCQFGIMPLTGFVLSVAFGILPVQAVVVLIQGCCPGGTASNILAYWVDGDMDLSVSMTTCSTLLALGMMPLCLFIYTKMWVDSGTIVIPYDSIGTSLVALVIPVSIGMYVNHKWPQKAKIILKIGSIAGAILIVLIAVVGGILYQSAWTIEPKLWIIGTIYPIAGYGLGFFLARIAGQPWYRCRTVALETGLQNTQLCSTIVQLSFSPEDLNLVFTFPLIYSIFQIAFAAILLGAYVAYKKCHGKNNTELQEKTDNEMEPRSSFQETNKGFQPDEK</sequence>
<gene>
    <name type="primary">SLC10A2</name>
    <name type="synonym">NTCP2</name>
</gene>
<proteinExistence type="evidence at protein level"/>
<protein>
    <recommendedName>
        <fullName>Ileal sodium/bile acid cotransporter</fullName>
    </recommendedName>
    <alternativeName>
        <fullName>Apical sodium-dependent bile acid transporter</fullName>
        <shortName>ASBT</shortName>
    </alternativeName>
    <alternativeName>
        <fullName>Ileal Na(+)/bile acid cotransporter</fullName>
    </alternativeName>
    <alternativeName>
        <fullName>Ileal sodium-dependent bile acid transporter</fullName>
        <shortName>IBAT</shortName>
        <shortName>ISBT</shortName>
    </alternativeName>
    <alternativeName>
        <fullName>Na(+)-dependent ileal bile acid transporter</fullName>
    </alternativeName>
    <alternativeName>
        <fullName>Sodium/taurocholate cotransporting polypeptide, ileal</fullName>
    </alternativeName>
    <alternativeName>
        <fullName>Solute carrier family 10 member 2</fullName>
    </alternativeName>
</protein>
<organism>
    <name type="scientific">Cricetulus griseus</name>
    <name type="common">Chinese hamster</name>
    <name type="synonym">Cricetulus barabensis griseus</name>
    <dbReference type="NCBI Taxonomy" id="10029"/>
    <lineage>
        <taxon>Eukaryota</taxon>
        <taxon>Metazoa</taxon>
        <taxon>Chordata</taxon>
        <taxon>Craniata</taxon>
        <taxon>Vertebrata</taxon>
        <taxon>Euteleostomi</taxon>
        <taxon>Mammalia</taxon>
        <taxon>Eutheria</taxon>
        <taxon>Euarchontoglires</taxon>
        <taxon>Glires</taxon>
        <taxon>Rodentia</taxon>
        <taxon>Myomorpha</taxon>
        <taxon>Muroidea</taxon>
        <taxon>Cricetidae</taxon>
        <taxon>Cricetinae</taxon>
        <taxon>Cricetulus</taxon>
    </lineage>
</organism>
<accession>Q60414</accession>
<accession>G3I3N2</accession>
<name>NTCP2_CRIGR</name>
<dbReference type="EMBL" id="U02028">
    <property type="protein sequence ID" value="AAA18640.1"/>
    <property type="molecule type" value="mRNA"/>
</dbReference>
<dbReference type="EMBL" id="JH001195">
    <property type="protein sequence ID" value="EGW09943.1"/>
    <property type="molecule type" value="Genomic_DNA"/>
</dbReference>
<dbReference type="RefSeq" id="NP_001233749.1">
    <property type="nucleotide sequence ID" value="NM_001246820.1"/>
</dbReference>
<dbReference type="RefSeq" id="XP_007634001.1">
    <property type="nucleotide sequence ID" value="XM_007635811.1"/>
</dbReference>
<dbReference type="RefSeq" id="XP_007648674.1">
    <property type="nucleotide sequence ID" value="XM_007650484.1"/>
</dbReference>
<dbReference type="SMR" id="Q60414"/>
<dbReference type="GlyCosmos" id="Q60414">
    <property type="glycosylation" value="2 sites, No reported glycans"/>
</dbReference>
<dbReference type="PaxDb" id="10029-XP_007634001.1"/>
<dbReference type="GeneID" id="100689396"/>
<dbReference type="KEGG" id="cge:100689396"/>
<dbReference type="CTD" id="6555"/>
<dbReference type="eggNOG" id="KOG2718">
    <property type="taxonomic scope" value="Eukaryota"/>
</dbReference>
<dbReference type="OrthoDB" id="203097at2759"/>
<dbReference type="Proteomes" id="UP000001075">
    <property type="component" value="Unassembled WGS sequence"/>
</dbReference>
<dbReference type="Proteomes" id="UP000694386">
    <property type="component" value="Unplaced"/>
</dbReference>
<dbReference type="Proteomes" id="UP001108280">
    <property type="component" value="Chromosome 1"/>
</dbReference>
<dbReference type="GO" id="GO:0016324">
    <property type="term" value="C:apical plasma membrane"/>
    <property type="evidence" value="ECO:0007669"/>
    <property type="project" value="TreeGrafter"/>
</dbReference>
<dbReference type="GO" id="GO:0008508">
    <property type="term" value="F:bile acid:sodium symporter activity"/>
    <property type="evidence" value="ECO:0007669"/>
    <property type="project" value="TreeGrafter"/>
</dbReference>
<dbReference type="FunFam" id="1.20.1530.20:FF:000010">
    <property type="entry name" value="Solute carrier family 10 member 6"/>
    <property type="match status" value="1"/>
</dbReference>
<dbReference type="Gene3D" id="1.20.1530.20">
    <property type="match status" value="1"/>
</dbReference>
<dbReference type="InterPro" id="IPR002657">
    <property type="entry name" value="BilAc:Na_symport/Acr3"/>
</dbReference>
<dbReference type="InterPro" id="IPR004710">
    <property type="entry name" value="Bilac:Na_transpt"/>
</dbReference>
<dbReference type="InterPro" id="IPR038770">
    <property type="entry name" value="Na+/solute_symporter_sf"/>
</dbReference>
<dbReference type="NCBIfam" id="TIGR00841">
    <property type="entry name" value="bass"/>
    <property type="match status" value="1"/>
</dbReference>
<dbReference type="PANTHER" id="PTHR10361:SF19">
    <property type="entry name" value="ILEAL SODIUM_BILE ACID COTRANSPORTER"/>
    <property type="match status" value="1"/>
</dbReference>
<dbReference type="PANTHER" id="PTHR10361">
    <property type="entry name" value="SODIUM-BILE ACID COTRANSPORTER"/>
    <property type="match status" value="1"/>
</dbReference>
<dbReference type="Pfam" id="PF01758">
    <property type="entry name" value="SBF"/>
    <property type="match status" value="1"/>
</dbReference>